<reference key="1">
    <citation type="journal article" date="2011" name="J. Bacteriol.">
        <title>Comparative genomics of 28 Salmonella enterica isolates: evidence for CRISPR-mediated adaptive sublineage evolution.</title>
        <authorList>
            <person name="Fricke W.F."/>
            <person name="Mammel M.K."/>
            <person name="McDermott P.F."/>
            <person name="Tartera C."/>
            <person name="White D.G."/>
            <person name="Leclerc J.E."/>
            <person name="Ravel J."/>
            <person name="Cebula T.A."/>
        </authorList>
    </citation>
    <scope>NUCLEOTIDE SEQUENCE [LARGE SCALE GENOMIC DNA]</scope>
    <source>
        <strain>SL254</strain>
    </source>
</reference>
<protein>
    <recommendedName>
        <fullName evidence="1">Crotonobetainyl-CoA reductase</fullName>
        <ecNumber evidence="1">1.3.8.13</ecNumber>
    </recommendedName>
    <alternativeName>
        <fullName evidence="1">Crotonobetainyl-CoA dehydrogenase</fullName>
    </alternativeName>
</protein>
<sequence>MDFNLNDEQELFVAGIRELMASENWEAYFAECDRDSVYPERFVKALADMGIDSLLIPEEHGGLEAGFVTVAAVWMELGRLGAPTYVLYQLPGGFNTFLREGTQEQIDKIMAFRGTGKQMWNSAITEPGAGSDVGSLKTTYTRKNGKVYLNGSKCFITSSAYTPYIVVMARDGASPDKPVYTEWFVDMSKAGIKVNKLEKLGLRMDSCCEITFDDVELDEKDMFGREGNGFNRVKEEFDHERFLVALTNYGTAMCAFEDAARYANQRVQFGEAIGRFQLIQEKFAHMAIKLNSMKNMLLEAAWKADNGTITSGDAAMCKYFCANAAFEVVDTAMQVLGGVGIAGNHRITRFWRDLRVDRVSGGSDEMQILTLGRAVLKQYR</sequence>
<proteinExistence type="inferred from homology"/>
<evidence type="ECO:0000255" key="1">
    <source>
        <dbReference type="HAMAP-Rule" id="MF_01052"/>
    </source>
</evidence>
<accession>B4T6J8</accession>
<dbReference type="EC" id="1.3.8.13" evidence="1"/>
<dbReference type="EMBL" id="CP001113">
    <property type="protein sequence ID" value="ACF62136.1"/>
    <property type="molecule type" value="Genomic_DNA"/>
</dbReference>
<dbReference type="RefSeq" id="WP_000347134.1">
    <property type="nucleotide sequence ID" value="NZ_CCMR01000003.1"/>
</dbReference>
<dbReference type="SMR" id="B4T6J8"/>
<dbReference type="GeneID" id="44979088"/>
<dbReference type="KEGG" id="see:SNSL254_A0077"/>
<dbReference type="HOGENOM" id="CLU_018204_0_2_6"/>
<dbReference type="UniPathway" id="UPA00117"/>
<dbReference type="Proteomes" id="UP000008824">
    <property type="component" value="Chromosome"/>
</dbReference>
<dbReference type="GO" id="GO:0005737">
    <property type="term" value="C:cytoplasm"/>
    <property type="evidence" value="ECO:0007669"/>
    <property type="project" value="UniProtKB-SubCell"/>
</dbReference>
<dbReference type="GO" id="GO:0003995">
    <property type="term" value="F:acyl-CoA dehydrogenase activity"/>
    <property type="evidence" value="ECO:0007669"/>
    <property type="project" value="InterPro"/>
</dbReference>
<dbReference type="GO" id="GO:0050660">
    <property type="term" value="F:flavin adenine dinucleotide binding"/>
    <property type="evidence" value="ECO:0007669"/>
    <property type="project" value="InterPro"/>
</dbReference>
<dbReference type="GO" id="GO:0009437">
    <property type="term" value="P:carnitine metabolic process"/>
    <property type="evidence" value="ECO:0007669"/>
    <property type="project" value="UniProtKB-UniRule"/>
</dbReference>
<dbReference type="CDD" id="cd00567">
    <property type="entry name" value="ACAD"/>
    <property type="match status" value="1"/>
</dbReference>
<dbReference type="FunFam" id="1.20.140.10:FF:000001">
    <property type="entry name" value="Acyl-CoA dehydrogenase"/>
    <property type="match status" value="1"/>
</dbReference>
<dbReference type="FunFam" id="2.40.110.10:FF:000002">
    <property type="entry name" value="Acyl-CoA dehydrogenase fadE12"/>
    <property type="match status" value="1"/>
</dbReference>
<dbReference type="FunFam" id="1.10.540.10:FF:000005">
    <property type="entry name" value="Crotonobetainyl-CoA reductase"/>
    <property type="match status" value="1"/>
</dbReference>
<dbReference type="Gene3D" id="1.10.540.10">
    <property type="entry name" value="Acyl-CoA dehydrogenase/oxidase, N-terminal domain"/>
    <property type="match status" value="1"/>
</dbReference>
<dbReference type="Gene3D" id="2.40.110.10">
    <property type="entry name" value="Butyryl-CoA Dehydrogenase, subunit A, domain 2"/>
    <property type="match status" value="1"/>
</dbReference>
<dbReference type="Gene3D" id="1.20.140.10">
    <property type="entry name" value="Butyryl-CoA Dehydrogenase, subunit A, domain 3"/>
    <property type="match status" value="1"/>
</dbReference>
<dbReference type="HAMAP" id="MF_01052">
    <property type="entry name" value="CaiA"/>
    <property type="match status" value="1"/>
</dbReference>
<dbReference type="InterPro" id="IPR006089">
    <property type="entry name" value="Acyl-CoA_DH_CS"/>
</dbReference>
<dbReference type="InterPro" id="IPR006091">
    <property type="entry name" value="Acyl-CoA_Oxase/DH_mid-dom"/>
</dbReference>
<dbReference type="InterPro" id="IPR046373">
    <property type="entry name" value="Acyl-CoA_Oxase/DH_mid-dom_sf"/>
</dbReference>
<dbReference type="InterPro" id="IPR036250">
    <property type="entry name" value="AcylCo_DH-like_C"/>
</dbReference>
<dbReference type="InterPro" id="IPR009075">
    <property type="entry name" value="AcylCo_DH/oxidase_C"/>
</dbReference>
<dbReference type="InterPro" id="IPR013786">
    <property type="entry name" value="AcylCoA_DH/ox_N"/>
</dbReference>
<dbReference type="InterPro" id="IPR037069">
    <property type="entry name" value="AcylCoA_DH/ox_N_sf"/>
</dbReference>
<dbReference type="InterPro" id="IPR009100">
    <property type="entry name" value="AcylCoA_DH/oxidase_NM_dom_sf"/>
</dbReference>
<dbReference type="InterPro" id="IPR023450">
    <property type="entry name" value="CaiA"/>
</dbReference>
<dbReference type="NCBIfam" id="NF002885">
    <property type="entry name" value="PRK03354.1"/>
    <property type="match status" value="1"/>
</dbReference>
<dbReference type="PANTHER" id="PTHR43884">
    <property type="entry name" value="ACYL-COA DEHYDROGENASE"/>
    <property type="match status" value="1"/>
</dbReference>
<dbReference type="PANTHER" id="PTHR43884:SF12">
    <property type="entry name" value="ISOVALERYL-COA DEHYDROGENASE, MITOCHONDRIAL-RELATED"/>
    <property type="match status" value="1"/>
</dbReference>
<dbReference type="Pfam" id="PF00441">
    <property type="entry name" value="Acyl-CoA_dh_1"/>
    <property type="match status" value="1"/>
</dbReference>
<dbReference type="Pfam" id="PF02770">
    <property type="entry name" value="Acyl-CoA_dh_M"/>
    <property type="match status" value="1"/>
</dbReference>
<dbReference type="Pfam" id="PF02771">
    <property type="entry name" value="Acyl-CoA_dh_N"/>
    <property type="match status" value="1"/>
</dbReference>
<dbReference type="PIRSF" id="PIRSF016578">
    <property type="entry name" value="HsaA"/>
    <property type="match status" value="1"/>
</dbReference>
<dbReference type="SUPFAM" id="SSF47203">
    <property type="entry name" value="Acyl-CoA dehydrogenase C-terminal domain-like"/>
    <property type="match status" value="1"/>
</dbReference>
<dbReference type="SUPFAM" id="SSF56645">
    <property type="entry name" value="Acyl-CoA dehydrogenase NM domain-like"/>
    <property type="match status" value="1"/>
</dbReference>
<dbReference type="PROSITE" id="PS00072">
    <property type="entry name" value="ACYL_COA_DH_1"/>
    <property type="match status" value="1"/>
</dbReference>
<dbReference type="PROSITE" id="PS00073">
    <property type="entry name" value="ACYL_COA_DH_2"/>
    <property type="match status" value="1"/>
</dbReference>
<name>CAIA_SALNS</name>
<keyword id="KW-0963">Cytoplasm</keyword>
<keyword id="KW-0274">FAD</keyword>
<keyword id="KW-0285">Flavoprotein</keyword>
<keyword id="KW-0560">Oxidoreductase</keyword>
<gene>
    <name evidence="1" type="primary">caiA</name>
    <name type="ordered locus">SNSL254_A0077</name>
</gene>
<feature type="chain" id="PRO_1000136283" description="Crotonobetainyl-CoA reductase">
    <location>
        <begin position="1"/>
        <end position="380"/>
    </location>
</feature>
<comment type="function">
    <text evidence="1">Catalyzes the reduction of crotonobetainyl-CoA to gamma-butyrobetainyl-CoA.</text>
</comment>
<comment type="catalytic activity">
    <reaction evidence="1">
        <text>4-(trimethylamino)butanoyl-CoA + oxidized [electron-transfer flavoprotein] + H(+) = crotonobetainyl-CoA + reduced [electron-transfer flavoprotein]</text>
        <dbReference type="Rhea" id="RHEA:51584"/>
        <dbReference type="Rhea" id="RHEA-COMP:10685"/>
        <dbReference type="Rhea" id="RHEA-COMP:10686"/>
        <dbReference type="ChEBI" id="CHEBI:15378"/>
        <dbReference type="ChEBI" id="CHEBI:57692"/>
        <dbReference type="ChEBI" id="CHEBI:58307"/>
        <dbReference type="ChEBI" id="CHEBI:60933"/>
        <dbReference type="ChEBI" id="CHEBI:61513"/>
        <dbReference type="EC" id="1.3.8.13"/>
    </reaction>
</comment>
<comment type="cofactor">
    <cofactor evidence="1">
        <name>FAD</name>
        <dbReference type="ChEBI" id="CHEBI:57692"/>
    </cofactor>
</comment>
<comment type="pathway">
    <text evidence="1">Amine and polyamine metabolism; carnitine metabolism.</text>
</comment>
<comment type="subunit">
    <text evidence="1">Homotetramer.</text>
</comment>
<comment type="subcellular location">
    <subcellularLocation>
        <location evidence="1">Cytoplasm</location>
    </subcellularLocation>
</comment>
<comment type="similarity">
    <text evidence="1">Belongs to the acyl-CoA dehydrogenase family.</text>
</comment>
<organism>
    <name type="scientific">Salmonella newport (strain SL254)</name>
    <dbReference type="NCBI Taxonomy" id="423368"/>
    <lineage>
        <taxon>Bacteria</taxon>
        <taxon>Pseudomonadati</taxon>
        <taxon>Pseudomonadota</taxon>
        <taxon>Gammaproteobacteria</taxon>
        <taxon>Enterobacterales</taxon>
        <taxon>Enterobacteriaceae</taxon>
        <taxon>Salmonella</taxon>
    </lineage>
</organism>